<protein>
    <recommendedName>
        <fullName evidence="1">Large ribosomal subunit protein uL23</fullName>
    </recommendedName>
    <alternativeName>
        <fullName evidence="2">50S ribosomal protein L23</fullName>
    </alternativeName>
</protein>
<reference key="1">
    <citation type="journal article" date="2008" name="J. Bacteriol.">
        <title>Comparative genome sequence analysis of multidrug-resistant Acinetobacter baumannii.</title>
        <authorList>
            <person name="Adams M.D."/>
            <person name="Goglin K."/>
            <person name="Molyneaux N."/>
            <person name="Hujer K.M."/>
            <person name="Lavender H."/>
            <person name="Jamison J.J."/>
            <person name="MacDonald I.J."/>
            <person name="Martin K.M."/>
            <person name="Russo T."/>
            <person name="Campagnari A.A."/>
            <person name="Hujer A.M."/>
            <person name="Bonomo R.A."/>
            <person name="Gill S.R."/>
        </authorList>
    </citation>
    <scope>NUCLEOTIDE SEQUENCE [LARGE SCALE GENOMIC DNA]</scope>
    <source>
        <strain>AB307-0294</strain>
    </source>
</reference>
<evidence type="ECO:0000255" key="1">
    <source>
        <dbReference type="HAMAP-Rule" id="MF_01369"/>
    </source>
</evidence>
<evidence type="ECO:0000305" key="2"/>
<organism>
    <name type="scientific">Acinetobacter baumannii (strain AB307-0294)</name>
    <dbReference type="NCBI Taxonomy" id="557600"/>
    <lineage>
        <taxon>Bacteria</taxon>
        <taxon>Pseudomonadati</taxon>
        <taxon>Pseudomonadota</taxon>
        <taxon>Gammaproteobacteria</taxon>
        <taxon>Moraxellales</taxon>
        <taxon>Moraxellaceae</taxon>
        <taxon>Acinetobacter</taxon>
        <taxon>Acinetobacter calcoaceticus/baumannii complex</taxon>
    </lineage>
</organism>
<feature type="chain" id="PRO_1000144515" description="Large ribosomal subunit protein uL23">
    <location>
        <begin position="1"/>
        <end position="106"/>
    </location>
</feature>
<sequence length="106" mass="11588">MNNERIYQVLKGPVFSEKAQVLGDTAGVQVFKVDINATKLEIKKAVEKLFGVEVVKVNTTITKGKTKRFGRTLGRRSDVKKAYVTLKAGQDVEMADLGDTAESAAE</sequence>
<keyword id="KW-0687">Ribonucleoprotein</keyword>
<keyword id="KW-0689">Ribosomal protein</keyword>
<keyword id="KW-0694">RNA-binding</keyword>
<keyword id="KW-0699">rRNA-binding</keyword>
<proteinExistence type="inferred from homology"/>
<gene>
    <name evidence="1" type="primary">rplW</name>
    <name type="ordered locus">ABBFA_000434</name>
</gene>
<dbReference type="EMBL" id="CP001172">
    <property type="protein sequence ID" value="ACJ56781.1"/>
    <property type="molecule type" value="Genomic_DNA"/>
</dbReference>
<dbReference type="RefSeq" id="WP_001058538.1">
    <property type="nucleotide sequence ID" value="NZ_CP001172.1"/>
</dbReference>
<dbReference type="SMR" id="B7GW04"/>
<dbReference type="GeneID" id="92895315"/>
<dbReference type="HOGENOM" id="CLU_037562_3_1_6"/>
<dbReference type="Proteomes" id="UP000006924">
    <property type="component" value="Chromosome"/>
</dbReference>
<dbReference type="GO" id="GO:1990904">
    <property type="term" value="C:ribonucleoprotein complex"/>
    <property type="evidence" value="ECO:0007669"/>
    <property type="project" value="UniProtKB-KW"/>
</dbReference>
<dbReference type="GO" id="GO:0005840">
    <property type="term" value="C:ribosome"/>
    <property type="evidence" value="ECO:0007669"/>
    <property type="project" value="UniProtKB-KW"/>
</dbReference>
<dbReference type="GO" id="GO:0019843">
    <property type="term" value="F:rRNA binding"/>
    <property type="evidence" value="ECO:0007669"/>
    <property type="project" value="UniProtKB-UniRule"/>
</dbReference>
<dbReference type="GO" id="GO:0003735">
    <property type="term" value="F:structural constituent of ribosome"/>
    <property type="evidence" value="ECO:0007669"/>
    <property type="project" value="InterPro"/>
</dbReference>
<dbReference type="GO" id="GO:0006412">
    <property type="term" value="P:translation"/>
    <property type="evidence" value="ECO:0007669"/>
    <property type="project" value="UniProtKB-UniRule"/>
</dbReference>
<dbReference type="FunFam" id="3.30.70.330:FF:000001">
    <property type="entry name" value="50S ribosomal protein L23"/>
    <property type="match status" value="1"/>
</dbReference>
<dbReference type="Gene3D" id="3.30.70.330">
    <property type="match status" value="1"/>
</dbReference>
<dbReference type="HAMAP" id="MF_01369_B">
    <property type="entry name" value="Ribosomal_uL23_B"/>
    <property type="match status" value="1"/>
</dbReference>
<dbReference type="InterPro" id="IPR012677">
    <property type="entry name" value="Nucleotide-bd_a/b_plait_sf"/>
</dbReference>
<dbReference type="InterPro" id="IPR013025">
    <property type="entry name" value="Ribosomal_uL23-like"/>
</dbReference>
<dbReference type="InterPro" id="IPR012678">
    <property type="entry name" value="Ribosomal_uL23/eL15/eS24_sf"/>
</dbReference>
<dbReference type="NCBIfam" id="NF004359">
    <property type="entry name" value="PRK05738.1-3"/>
    <property type="match status" value="1"/>
</dbReference>
<dbReference type="NCBIfam" id="NF004363">
    <property type="entry name" value="PRK05738.2-4"/>
    <property type="match status" value="1"/>
</dbReference>
<dbReference type="PANTHER" id="PTHR11620">
    <property type="entry name" value="60S RIBOSOMAL PROTEIN L23A"/>
    <property type="match status" value="1"/>
</dbReference>
<dbReference type="Pfam" id="PF00276">
    <property type="entry name" value="Ribosomal_L23"/>
    <property type="match status" value="1"/>
</dbReference>
<dbReference type="SUPFAM" id="SSF54189">
    <property type="entry name" value="Ribosomal proteins S24e, L23 and L15e"/>
    <property type="match status" value="1"/>
</dbReference>
<accession>B7GW04</accession>
<name>RL23_ACIB3</name>
<comment type="function">
    <text evidence="1">One of the early assembly proteins it binds 23S rRNA. One of the proteins that surrounds the polypeptide exit tunnel on the outside of the ribosome. Forms the main docking site for trigger factor binding to the ribosome.</text>
</comment>
<comment type="subunit">
    <text evidence="1">Part of the 50S ribosomal subunit. Contacts protein L29, and trigger factor when it is bound to the ribosome.</text>
</comment>
<comment type="similarity">
    <text evidence="1">Belongs to the universal ribosomal protein uL23 family.</text>
</comment>